<sequence>MSLQIGRTERARSPVFVFAHKRQLLHGRCSTIDNANCSTCSMKINSTCTLTALPIAALPGPRTTSHYSTAAANWCYATVAPRARSSTIAASLGTPAPSSSASFRPKLIRTTPVQAAPVAPALMDAAVERLKTGFEKFKTEVYDKKPDFFEPLKAGQAPKYMVFACADSRVCPSVTLGLEPGEAFTIRNIANMVPAYCKNKYAGVGSAIEYAVCALKVEVIVVIGHSRCGGIKALLSLKDGADDSFHFVEDWVRIGFPAKKKVQTECASMPFDDQCTVLEKEAVNVSLQNLLTYPFVKEGVTNGTLKLVGGHYDFVSGKFETWEQ</sequence>
<dbReference type="EC" id="4.2.1.1"/>
<dbReference type="EMBL" id="L36959">
    <property type="protein sequence ID" value="AAC41656.1"/>
    <property type="molecule type" value="mRNA"/>
</dbReference>
<dbReference type="PIR" id="T04478">
    <property type="entry name" value="T04478"/>
</dbReference>
<dbReference type="SMR" id="P40880"/>
<dbReference type="ExpressionAtlas" id="P40880">
    <property type="expression patterns" value="baseline and differential"/>
</dbReference>
<dbReference type="GO" id="GO:0009570">
    <property type="term" value="C:chloroplast stroma"/>
    <property type="evidence" value="ECO:0007669"/>
    <property type="project" value="UniProtKB-SubCell"/>
</dbReference>
<dbReference type="GO" id="GO:0004089">
    <property type="term" value="F:carbonate dehydratase activity"/>
    <property type="evidence" value="ECO:0007669"/>
    <property type="project" value="UniProtKB-EC"/>
</dbReference>
<dbReference type="GO" id="GO:0008270">
    <property type="term" value="F:zinc ion binding"/>
    <property type="evidence" value="ECO:0007669"/>
    <property type="project" value="InterPro"/>
</dbReference>
<dbReference type="GO" id="GO:0015976">
    <property type="term" value="P:carbon utilization"/>
    <property type="evidence" value="ECO:0007669"/>
    <property type="project" value="InterPro"/>
</dbReference>
<dbReference type="CDD" id="cd00884">
    <property type="entry name" value="beta_CA_cladeB"/>
    <property type="match status" value="1"/>
</dbReference>
<dbReference type="FunFam" id="3.40.1050.10:FF:000008">
    <property type="entry name" value="Carbonic anhydrase"/>
    <property type="match status" value="1"/>
</dbReference>
<dbReference type="Gene3D" id="3.40.1050.10">
    <property type="entry name" value="Carbonic anhydrase"/>
    <property type="match status" value="1"/>
</dbReference>
<dbReference type="InterPro" id="IPR045066">
    <property type="entry name" value="Beta_CA_cladeB"/>
</dbReference>
<dbReference type="InterPro" id="IPR001765">
    <property type="entry name" value="Carbonic_anhydrase"/>
</dbReference>
<dbReference type="InterPro" id="IPR015892">
    <property type="entry name" value="Carbonic_anhydrase_CS"/>
</dbReference>
<dbReference type="InterPro" id="IPR036874">
    <property type="entry name" value="Carbonic_anhydrase_sf"/>
</dbReference>
<dbReference type="PANTHER" id="PTHR11002:SF56">
    <property type="entry name" value="BETA CARBONIC ANHYDRASE 2, CHLOROPLASTIC"/>
    <property type="match status" value="1"/>
</dbReference>
<dbReference type="PANTHER" id="PTHR11002">
    <property type="entry name" value="CARBONIC ANHYDRASE"/>
    <property type="match status" value="1"/>
</dbReference>
<dbReference type="Pfam" id="PF00484">
    <property type="entry name" value="Pro_CA"/>
    <property type="match status" value="1"/>
</dbReference>
<dbReference type="SMART" id="SM00947">
    <property type="entry name" value="Pro_CA"/>
    <property type="match status" value="1"/>
</dbReference>
<dbReference type="SUPFAM" id="SSF53056">
    <property type="entry name" value="beta-carbonic anhydrase, cab"/>
    <property type="match status" value="1"/>
</dbReference>
<dbReference type="PROSITE" id="PS00704">
    <property type="entry name" value="PROK_CO2_ANHYDRASE_1"/>
    <property type="match status" value="1"/>
</dbReference>
<dbReference type="PROSITE" id="PS00705">
    <property type="entry name" value="PROK_CO2_ANHYDRASE_2"/>
    <property type="match status" value="1"/>
</dbReference>
<feature type="transit peptide" description="Chloroplast" evidence="2">
    <location>
        <begin position="1"/>
        <end status="unknown"/>
    </location>
</feature>
<feature type="chain" id="PRO_0000004268" description="Carbonic anhydrase, chloroplastic">
    <location>
        <begin status="unknown"/>
        <end position="324"/>
    </location>
</feature>
<evidence type="ECO:0000250" key="1"/>
<evidence type="ECO:0000255" key="2"/>
<evidence type="ECO:0000305" key="3"/>
<proteinExistence type="evidence at transcript level"/>
<organism>
    <name type="scientific">Hordeum vulgare</name>
    <name type="common">Barley</name>
    <dbReference type="NCBI Taxonomy" id="4513"/>
    <lineage>
        <taxon>Eukaryota</taxon>
        <taxon>Viridiplantae</taxon>
        <taxon>Streptophyta</taxon>
        <taxon>Embryophyta</taxon>
        <taxon>Tracheophyta</taxon>
        <taxon>Spermatophyta</taxon>
        <taxon>Magnoliopsida</taxon>
        <taxon>Liliopsida</taxon>
        <taxon>Poales</taxon>
        <taxon>Poaceae</taxon>
        <taxon>BOP clade</taxon>
        <taxon>Pooideae</taxon>
        <taxon>Triticodae</taxon>
        <taxon>Triticeae</taxon>
        <taxon>Hordeinae</taxon>
        <taxon>Hordeum</taxon>
    </lineage>
</organism>
<reference key="1">
    <citation type="journal article" date="1995" name="Plant Physiol.">
        <title>Sequence of a cDNA encoding carbonic anhydrase from barley.</title>
        <authorList>
            <person name="Bracey M.H."/>
            <person name="Bartlett S.G."/>
        </authorList>
    </citation>
    <scope>NUCLEOTIDE SEQUENCE [MRNA]</scope>
</reference>
<keyword id="KW-0150">Chloroplast</keyword>
<keyword id="KW-0456">Lyase</keyword>
<keyword id="KW-0934">Plastid</keyword>
<keyword id="KW-0809">Transit peptide</keyword>
<keyword id="KW-0862">Zinc</keyword>
<protein>
    <recommendedName>
        <fullName>Carbonic anhydrase, chloroplastic</fullName>
        <ecNumber>4.2.1.1</ecNumber>
    </recommendedName>
    <alternativeName>
        <fullName>Carbonate dehydratase</fullName>
    </alternativeName>
</protein>
<name>CAHC_HORVU</name>
<comment type="function">
    <text>Reversible hydration of carbon dioxide.</text>
</comment>
<comment type="catalytic activity">
    <reaction>
        <text>hydrogencarbonate + H(+) = CO2 + H2O</text>
        <dbReference type="Rhea" id="RHEA:10748"/>
        <dbReference type="ChEBI" id="CHEBI:15377"/>
        <dbReference type="ChEBI" id="CHEBI:15378"/>
        <dbReference type="ChEBI" id="CHEBI:16526"/>
        <dbReference type="ChEBI" id="CHEBI:17544"/>
        <dbReference type="EC" id="4.2.1.1"/>
    </reaction>
</comment>
<comment type="subunit">
    <text evidence="1">Homohexamer.</text>
</comment>
<comment type="subcellular location">
    <subcellularLocation>
        <location evidence="1">Plastid</location>
        <location evidence="1">Chloroplast stroma</location>
    </subcellularLocation>
</comment>
<comment type="similarity">
    <text evidence="3">Belongs to the beta-class carbonic anhydrase family.</text>
</comment>
<accession>P40880</accession>